<dbReference type="EMBL" id="X53616">
    <property type="protein sequence ID" value="CAA37678.1"/>
    <property type="molecule type" value="mRNA"/>
</dbReference>
<dbReference type="PIR" id="A37273">
    <property type="entry name" value="A37273"/>
</dbReference>
<dbReference type="RefSeq" id="NP_001003232.1">
    <property type="nucleotide sequence ID" value="NM_001003232.1"/>
</dbReference>
<dbReference type="PDB" id="1JHN">
    <property type="method" value="X-ray"/>
    <property type="resolution" value="2.90 A"/>
    <property type="chains" value="A=45-468"/>
</dbReference>
<dbReference type="PDB" id="8RJC">
    <property type="method" value="EM"/>
    <property type="resolution" value="2.90 A"/>
    <property type="chains" value="9=1-593"/>
</dbReference>
<dbReference type="PDB" id="8RJD">
    <property type="method" value="EM"/>
    <property type="resolution" value="2.79 A"/>
    <property type="chains" value="9=1-593"/>
</dbReference>
<dbReference type="PDBsum" id="1JHN"/>
<dbReference type="PDBsum" id="8RJC"/>
<dbReference type="PDBsum" id="8RJD"/>
<dbReference type="EMDB" id="EMD-19197"/>
<dbReference type="EMDB" id="EMD-19198"/>
<dbReference type="SMR" id="P24643"/>
<dbReference type="BioGRID" id="139826">
    <property type="interactions" value="2"/>
</dbReference>
<dbReference type="DIP" id="DIP-29133N"/>
<dbReference type="FunCoup" id="P24643">
    <property type="interactions" value="1971"/>
</dbReference>
<dbReference type="IntAct" id="P24643">
    <property type="interactions" value="1"/>
</dbReference>
<dbReference type="STRING" id="9615.ENSCAFP00000000498"/>
<dbReference type="UniLectin" id="P24643"/>
<dbReference type="iPTMnet" id="P24643"/>
<dbReference type="SwissPalm" id="P24643"/>
<dbReference type="PaxDb" id="9612-ENSCAFP00000042695"/>
<dbReference type="GeneID" id="403908"/>
<dbReference type="KEGG" id="cfa:403908"/>
<dbReference type="CTD" id="821"/>
<dbReference type="eggNOG" id="KOG0675">
    <property type="taxonomic scope" value="Eukaryota"/>
</dbReference>
<dbReference type="InParanoid" id="P24643"/>
<dbReference type="OrthoDB" id="1938156at2759"/>
<dbReference type="EvolutionaryTrace" id="P24643"/>
<dbReference type="Proteomes" id="UP000002254">
    <property type="component" value="Unplaced"/>
</dbReference>
<dbReference type="Proteomes" id="UP000694429">
    <property type="component" value="Unplaced"/>
</dbReference>
<dbReference type="Proteomes" id="UP000694542">
    <property type="component" value="Unplaced"/>
</dbReference>
<dbReference type="Proteomes" id="UP000805418">
    <property type="component" value="Unplaced"/>
</dbReference>
<dbReference type="GO" id="GO:0005783">
    <property type="term" value="C:endoplasmic reticulum"/>
    <property type="evidence" value="ECO:0000250"/>
    <property type="project" value="UniProtKB"/>
</dbReference>
<dbReference type="GO" id="GO:0005789">
    <property type="term" value="C:endoplasmic reticulum membrane"/>
    <property type="evidence" value="ECO:0000250"/>
    <property type="project" value="AgBase"/>
</dbReference>
<dbReference type="GO" id="GO:0033162">
    <property type="term" value="C:melanosome membrane"/>
    <property type="evidence" value="ECO:0007669"/>
    <property type="project" value="UniProtKB-SubCell"/>
</dbReference>
<dbReference type="GO" id="GO:0031966">
    <property type="term" value="C:mitochondrial membrane"/>
    <property type="evidence" value="ECO:0007669"/>
    <property type="project" value="UniProtKB-SubCell"/>
</dbReference>
<dbReference type="GO" id="GO:0098793">
    <property type="term" value="C:presynapse"/>
    <property type="evidence" value="ECO:0007669"/>
    <property type="project" value="GOC"/>
</dbReference>
<dbReference type="GO" id="GO:0005509">
    <property type="term" value="F:calcium ion binding"/>
    <property type="evidence" value="ECO:0000318"/>
    <property type="project" value="GO_Central"/>
</dbReference>
<dbReference type="GO" id="GO:0030246">
    <property type="term" value="F:carbohydrate binding"/>
    <property type="evidence" value="ECO:0007669"/>
    <property type="project" value="UniProtKB-KW"/>
</dbReference>
<dbReference type="GO" id="GO:0051082">
    <property type="term" value="F:unfolded protein binding"/>
    <property type="evidence" value="ECO:0007669"/>
    <property type="project" value="InterPro"/>
</dbReference>
<dbReference type="GO" id="GO:0072583">
    <property type="term" value="P:clathrin-dependent endocytosis"/>
    <property type="evidence" value="ECO:0000250"/>
    <property type="project" value="UniProtKB"/>
</dbReference>
<dbReference type="GO" id="GO:0036503">
    <property type="term" value="P:ERAD pathway"/>
    <property type="evidence" value="ECO:0000318"/>
    <property type="project" value="GO_Central"/>
</dbReference>
<dbReference type="GO" id="GO:0006457">
    <property type="term" value="P:protein folding"/>
    <property type="evidence" value="ECO:0000318"/>
    <property type="project" value="GO_Central"/>
</dbReference>
<dbReference type="GO" id="GO:0048488">
    <property type="term" value="P:synaptic vesicle endocytosis"/>
    <property type="evidence" value="ECO:0000250"/>
    <property type="project" value="UniProtKB"/>
</dbReference>
<dbReference type="FunFam" id="2.10.250.10:FF:000001">
    <property type="entry name" value="Calnexin homolog"/>
    <property type="match status" value="1"/>
</dbReference>
<dbReference type="FunFam" id="2.60.120.200:FF:000430">
    <property type="entry name" value="Si:ch211-274f20.2"/>
    <property type="match status" value="1"/>
</dbReference>
<dbReference type="Gene3D" id="2.60.120.200">
    <property type="match status" value="1"/>
</dbReference>
<dbReference type="Gene3D" id="2.10.250.10">
    <property type="entry name" value="Calreticulin/calnexin, P domain"/>
    <property type="match status" value="1"/>
</dbReference>
<dbReference type="InterPro" id="IPR001580">
    <property type="entry name" value="Calret/calnex"/>
</dbReference>
<dbReference type="InterPro" id="IPR018124">
    <property type="entry name" value="Calret/calnex_CS"/>
</dbReference>
<dbReference type="InterPro" id="IPR009033">
    <property type="entry name" value="Calreticulin/calnexin_P_dom_sf"/>
</dbReference>
<dbReference type="InterPro" id="IPR013320">
    <property type="entry name" value="ConA-like_dom_sf"/>
</dbReference>
<dbReference type="PANTHER" id="PTHR11073:SF11">
    <property type="entry name" value="CALNEXIN"/>
    <property type="match status" value="1"/>
</dbReference>
<dbReference type="PANTHER" id="PTHR11073">
    <property type="entry name" value="CALRETICULIN AND CALNEXIN"/>
    <property type="match status" value="1"/>
</dbReference>
<dbReference type="Pfam" id="PF00262">
    <property type="entry name" value="Calreticulin"/>
    <property type="match status" value="1"/>
</dbReference>
<dbReference type="PRINTS" id="PR00626">
    <property type="entry name" value="CALRETICULIN"/>
</dbReference>
<dbReference type="SUPFAM" id="SSF49899">
    <property type="entry name" value="Concanavalin A-like lectins/glucanases"/>
    <property type="match status" value="2"/>
</dbReference>
<dbReference type="SUPFAM" id="SSF63887">
    <property type="entry name" value="P-domain of calnexin/calreticulin"/>
    <property type="match status" value="1"/>
</dbReference>
<dbReference type="PROSITE" id="PS00803">
    <property type="entry name" value="CALRETICULIN_1"/>
    <property type="match status" value="1"/>
</dbReference>
<dbReference type="PROSITE" id="PS00804">
    <property type="entry name" value="CALRETICULIN_2"/>
    <property type="match status" value="1"/>
</dbReference>
<dbReference type="PROSITE" id="PS00805">
    <property type="entry name" value="CALRETICULIN_REPEAT"/>
    <property type="match status" value="3"/>
</dbReference>
<organism>
    <name type="scientific">Canis lupus familiaris</name>
    <name type="common">Dog</name>
    <name type="synonym">Canis familiaris</name>
    <dbReference type="NCBI Taxonomy" id="9615"/>
    <lineage>
        <taxon>Eukaryota</taxon>
        <taxon>Metazoa</taxon>
        <taxon>Chordata</taxon>
        <taxon>Craniata</taxon>
        <taxon>Vertebrata</taxon>
        <taxon>Euteleostomi</taxon>
        <taxon>Mammalia</taxon>
        <taxon>Eutheria</taxon>
        <taxon>Laurasiatheria</taxon>
        <taxon>Carnivora</taxon>
        <taxon>Caniformia</taxon>
        <taxon>Canidae</taxon>
        <taxon>Canis</taxon>
    </lineage>
</organism>
<gene>
    <name type="primary">CANX</name>
</gene>
<evidence type="ECO:0000250" key="1"/>
<evidence type="ECO:0000250" key="2">
    <source>
        <dbReference type="UniProtKB" id="P14211"/>
    </source>
</evidence>
<evidence type="ECO:0000250" key="3">
    <source>
        <dbReference type="UniProtKB" id="P27824"/>
    </source>
</evidence>
<evidence type="ECO:0000250" key="4">
    <source>
        <dbReference type="UniProtKB" id="P35564"/>
    </source>
</evidence>
<evidence type="ECO:0000250" key="5">
    <source>
        <dbReference type="UniProtKB" id="P35565"/>
    </source>
</evidence>
<evidence type="ECO:0000255" key="6"/>
<evidence type="ECO:0000256" key="7">
    <source>
        <dbReference type="SAM" id="MobiDB-lite"/>
    </source>
</evidence>
<evidence type="ECO:0000269" key="8">
    <source>
    </source>
</evidence>
<evidence type="ECO:0000269" key="9">
    <source>
    </source>
</evidence>
<evidence type="ECO:0000269" key="10">
    <source>
    </source>
</evidence>
<evidence type="ECO:0000305" key="11"/>
<evidence type="ECO:0000305" key="12">
    <source>
    </source>
</evidence>
<evidence type="ECO:0000305" key="13">
    <source>
    </source>
</evidence>
<evidence type="ECO:0007829" key="14">
    <source>
        <dbReference type="PDB" id="1JHN"/>
    </source>
</evidence>
<comment type="function">
    <text evidence="1">Calcium-binding protein that interacts with newly synthesized monoglucosylated glycoproteins in the endoplasmic reticulum. It may act in assisting protein assembly and/or in the retention within the ER of unassembled protein subunits. It seems to play a major role in the quality control apparatus of the ER by the retention of incorrectly folded proteins. Associated with partial T-cell antigen receptor complexes that escape the ER of immature thymocytes, it may function as a signaling complex regulating thymocyte maturation. Additionally it may play a role in receptor-mediated endocytosis at the synapse (By similarity).</text>
</comment>
<comment type="subunit">
    <text evidence="3 4 5 9">Interacts with MAPK3/ERK1 (By similarity). Interacts with KCNH2 (By similarity). Associates with ribosomes (By similarity). Interacts with SGIP1; involved in negative regulation of endocytosis (By similarity). The palmitoylated form interacts with the ribosome-translocon complex component SSR1, promoting efficient folding of glycoproteins (By similarity). Interacts with SERPINA2P/SERPINA2 and with the S and Z variants of SERPINA1 (By similarity). Interacts with PPIB (PubMed:20801878). Interacts with ZNRF4 (By similarity). Interacts with SMIM22 (By similarity). Interacts with TMX2 (By similarity). Interacts with TMEM35A/NACHO and CHRNA7 (By similarity). Interacts with reticulophagy regulators RETREG2 and RETREG3 (By similarity). Interacts with DNM1L; may form part of a larger protein complex at the ER-mitochondrial interface during mitochondrial fission (By similarity). Interacts with ADAM7 (By similarity).</text>
</comment>
<comment type="interaction">
    <interactant intactId="EBI-15596385">
        <id>P24643</id>
    </interactant>
    <interactant intactId="EBI-979862">
        <id>P30101</id>
        <label>PDIA3</label>
    </interactant>
    <organismsDiffer>true</organismsDiffer>
    <experiments>3</experiments>
</comment>
<comment type="subcellular location">
    <subcellularLocation>
        <location evidence="10">Endoplasmic reticulum membrane</location>
        <topology evidence="6">Single-pass type I membrane protein</topology>
    </subcellularLocation>
    <subcellularLocation>
        <location evidence="10">Mitochondrion membrane</location>
        <topology evidence="6">Single-pass type I membrane protein</topology>
    </subcellularLocation>
    <subcellularLocation>
        <location evidence="3">Melanosome membrane</location>
        <topology evidence="6">Single-pass type I membrane protein</topology>
    </subcellularLocation>
    <text evidence="3 10">The palmitoylated form preferentially localizes to the perinuclear rough ER (By similarity). Localizes to endoplasmic reticulum mitochondria-associated membrane (MAMs) that connect the endoplasmic reticulum and the mitochondria (PubMed:22045338).</text>
</comment>
<comment type="PTM">
    <text evidence="1">Phosphorylated at Ser-565 by MAPK3/ERK1. Phosphorylation by MAPK3/ERK1 increases its association with ribosomes (By similarity).</text>
</comment>
<comment type="PTM">
    <text evidence="1">Palmitoylation by DHHC6 leads to the preferential localization to the perinuclear rough ER. It mediates the association of calnexin with the ribosome-translocon complex (RTC) which is required for efficient folding of glycosylated proteins (By similarity).</text>
</comment>
<comment type="PTM">
    <text evidence="3">Ubiquitinated, leading to proteasomal degradation. Probably ubiquitinated by ZNRF4.</text>
</comment>
<comment type="similarity">
    <text evidence="11">Belongs to the calreticulin family.</text>
</comment>
<reference key="1">
    <citation type="journal article" date="1991" name="J. Biol. Chem.">
        <title>SSR alpha and associated calnexin are major calcium binding proteins of the endoplasmic reticulum membrane.</title>
        <authorList>
            <person name="Wada I."/>
            <person name="Rindress D."/>
            <person name="Cameron P.H."/>
            <person name="Ou W.-J."/>
            <person name="Doherty J.J. II"/>
            <person name="Louvard D."/>
            <person name="Bell A.W."/>
            <person name="Dignard D."/>
            <person name="Thomas D.Y."/>
            <person name="Bergeron J.J.M."/>
        </authorList>
    </citation>
    <scope>NUCLEOTIDE SEQUENCE [MRNA]</scope>
    <scope>PARTIAL PROTEIN SEQUENCE</scope>
</reference>
<reference key="2">
    <citation type="submission" date="1997-02" db="EMBL/GenBank/DDBJ databases">
        <authorList>
            <person name="Dignard D."/>
        </authorList>
    </citation>
    <scope>SEQUENCE REVISION TO 67</scope>
</reference>
<reference key="3">
    <citation type="journal article" date="2010" name="J. Biol. Chem.">
        <title>Structural basis of cyclophilin B binding by the calnexin/calreticulin P-domain.</title>
        <authorList>
            <person name="Kozlov G."/>
            <person name="Bastos-Aristizabal S."/>
            <person name="Maattanen P."/>
            <person name="Rosenauer A."/>
            <person name="Zheng F."/>
            <person name="Killikelly A."/>
            <person name="Trempe J.F."/>
            <person name="Thomas D.Y."/>
            <person name="Gehring K."/>
        </authorList>
    </citation>
    <scope>INTERACTION WITH PPIB</scope>
    <scope>MUTAGENESIS OF ASP-348</scope>
</reference>
<reference key="4">
    <citation type="journal article" date="2001" name="Mol. Cell">
        <title>The Structure of calnexin, an ER chaperone involved in quality control of protein folding.</title>
        <authorList>
            <person name="Schrag J.D."/>
            <person name="Bergeron J.J."/>
            <person name="Li Y."/>
            <person name="Borisova S."/>
            <person name="Hahn M."/>
            <person name="Thomas D.Y."/>
            <person name="Cygler M."/>
        </authorList>
    </citation>
    <scope>X-RAY CRYSTALLOGRAPHY (2.9 ANGSTROMS) OF 45-468 IN COMPLEX WITH CALCIUM</scope>
    <scope>DISULFIDE BONDS</scope>
    <scope>PROBABLE CARBOHYDRATE-INTERACTING SITES</scope>
</reference>
<reference key="5">
    <citation type="journal article" date="2012" name="EMBO J.">
        <title>Palmitoylated TMX and calnexin target to the mitochondria-associated membrane.</title>
        <authorList>
            <person name="Lynes E.M."/>
            <person name="Bui M."/>
            <person name="Yap M.C."/>
            <person name="Benson M.D."/>
            <person name="Schneider B."/>
            <person name="Ellgaard L."/>
            <person name="Berthiaume L.G."/>
            <person name="Simmen T."/>
        </authorList>
    </citation>
    <scope>PALMITOYLATION AT CYS-503 AND CYS-504</scope>
    <scope>SUBCELLULAR LOCATION</scope>
    <scope>MUTAGENESIS OF 503-CYS--CYS-504</scope>
</reference>
<keyword id="KW-0002">3D-structure</keyword>
<keyword id="KW-0007">Acetylation</keyword>
<keyword id="KW-0106">Calcium</keyword>
<keyword id="KW-0143">Chaperone</keyword>
<keyword id="KW-0903">Direct protein sequencing</keyword>
<keyword id="KW-1015">Disulfide bond</keyword>
<keyword id="KW-0256">Endoplasmic reticulum</keyword>
<keyword id="KW-0430">Lectin</keyword>
<keyword id="KW-0449">Lipoprotein</keyword>
<keyword id="KW-0472">Membrane</keyword>
<keyword id="KW-0479">Metal-binding</keyword>
<keyword id="KW-0496">Mitochondrion</keyword>
<keyword id="KW-0564">Palmitate</keyword>
<keyword id="KW-0597">Phosphoprotein</keyword>
<keyword id="KW-1185">Reference proteome</keyword>
<keyword id="KW-0677">Repeat</keyword>
<keyword id="KW-0732">Signal</keyword>
<keyword id="KW-0812">Transmembrane</keyword>
<keyword id="KW-1133">Transmembrane helix</keyword>
<keyword id="KW-0832">Ubl conjugation</keyword>
<feature type="signal peptide">
    <location>
        <begin position="1"/>
        <end position="20"/>
    </location>
</feature>
<feature type="chain" id="PRO_0000004197" description="Calnexin">
    <location>
        <begin position="21"/>
        <end position="593"/>
    </location>
</feature>
<feature type="topological domain" description="Lumenal" evidence="6">
    <location>
        <begin position="21"/>
        <end position="482"/>
    </location>
</feature>
<feature type="transmembrane region" description="Helical" evidence="6">
    <location>
        <begin position="483"/>
        <end position="503"/>
    </location>
</feature>
<feature type="topological domain" description="Cytoplasmic" evidence="6">
    <location>
        <begin position="504"/>
        <end position="593"/>
    </location>
</feature>
<feature type="repeat" description="1-1">
    <location>
        <begin position="279"/>
        <end position="290"/>
    </location>
</feature>
<feature type="repeat" description="1-2">
    <location>
        <begin position="296"/>
        <end position="307"/>
    </location>
</feature>
<feature type="repeat" description="1-3">
    <location>
        <begin position="315"/>
        <end position="326"/>
    </location>
</feature>
<feature type="repeat" description="1-4">
    <location>
        <begin position="334"/>
        <end position="345"/>
    </location>
</feature>
<feature type="repeat" description="2-1">
    <location>
        <begin position="349"/>
        <end position="359"/>
    </location>
</feature>
<feature type="repeat" description="2-2">
    <location>
        <begin position="368"/>
        <end position="378"/>
    </location>
</feature>
<feature type="repeat" description="2-3">
    <location>
        <begin position="382"/>
        <end position="392"/>
    </location>
</feature>
<feature type="repeat" description="2-4">
    <location>
        <begin position="396"/>
        <end position="406"/>
    </location>
</feature>
<feature type="region of interest" description="Disordered" evidence="7">
    <location>
        <begin position="261"/>
        <end position="346"/>
    </location>
</feature>
<feature type="region of interest" description="P domain (Extended arm)">
    <location>
        <begin position="277"/>
        <end position="410"/>
    </location>
</feature>
<feature type="region of interest" description="4 X approximate repeats">
    <location>
        <begin position="279"/>
        <end position="345"/>
    </location>
</feature>
<feature type="region of interest" description="Interaction with PPIB" evidence="9">
    <location>
        <begin position="327"/>
        <end position="360"/>
    </location>
</feature>
<feature type="region of interest" description="4 X approximate repeats">
    <location>
        <begin position="349"/>
        <end position="406"/>
    </location>
</feature>
<feature type="region of interest" description="Sufficient to mediate interaction with SGIP1" evidence="1">
    <location>
        <begin position="504"/>
        <end position="593"/>
    </location>
</feature>
<feature type="region of interest" description="Disordered" evidence="7">
    <location>
        <begin position="511"/>
        <end position="593"/>
    </location>
</feature>
<feature type="compositionally biased region" description="Basic and acidic residues" evidence="7">
    <location>
        <begin position="282"/>
        <end position="320"/>
    </location>
</feature>
<feature type="compositionally biased region" description="Acidic residues" evidence="7">
    <location>
        <begin position="324"/>
        <end position="346"/>
    </location>
</feature>
<feature type="compositionally biased region" description="Acidic residues" evidence="7">
    <location>
        <begin position="526"/>
        <end position="548"/>
    </location>
</feature>
<feature type="binding site" evidence="8">
    <location>
        <position position="75"/>
    </location>
    <ligand>
        <name>Ca(2+)</name>
        <dbReference type="ChEBI" id="CHEBI:29108"/>
    </ligand>
</feature>
<feature type="binding site" evidence="8">
    <location>
        <position position="118"/>
    </location>
    <ligand>
        <name>Ca(2+)</name>
        <dbReference type="ChEBI" id="CHEBI:29108"/>
    </ligand>
</feature>
<feature type="binding site" evidence="12">
    <location>
        <position position="165"/>
    </location>
    <ligand>
        <name>an alpha-D-glucoside</name>
        <dbReference type="ChEBI" id="CHEBI:22390"/>
    </ligand>
</feature>
<feature type="binding site" evidence="12">
    <location>
        <position position="167"/>
    </location>
    <ligand>
        <name>an alpha-D-glucoside</name>
        <dbReference type="ChEBI" id="CHEBI:22390"/>
    </ligand>
</feature>
<feature type="binding site" evidence="12">
    <location>
        <position position="186"/>
    </location>
    <ligand>
        <name>an alpha-D-glucoside</name>
        <dbReference type="ChEBI" id="CHEBI:22390"/>
    </ligand>
</feature>
<feature type="binding site" evidence="2">
    <location>
        <position position="193"/>
    </location>
    <ligand>
        <name>an alpha-D-glucoside</name>
        <dbReference type="ChEBI" id="CHEBI:22390"/>
    </ligand>
</feature>
<feature type="binding site" evidence="12">
    <location>
        <position position="426"/>
    </location>
    <ligand>
        <name>an alpha-D-glucoside</name>
        <dbReference type="ChEBI" id="CHEBI:22390"/>
    </ligand>
</feature>
<feature type="binding site" evidence="8">
    <location>
        <position position="437"/>
    </location>
    <ligand>
        <name>Ca(2+)</name>
        <dbReference type="ChEBI" id="CHEBI:29108"/>
    </ligand>
</feature>
<feature type="modified residue" description="N6-acetyllysine" evidence="3">
    <location>
        <position position="138"/>
    </location>
</feature>
<feature type="modified residue" description="Phosphoserine" evidence="3">
    <location>
        <position position="555"/>
    </location>
</feature>
<feature type="modified residue" description="Phosphothreonine" evidence="3">
    <location>
        <position position="563"/>
    </location>
</feature>
<feature type="modified residue" description="Phosphoserine; by MAPK3" evidence="3">
    <location>
        <position position="565"/>
    </location>
</feature>
<feature type="modified residue" description="Phosphoserine" evidence="3">
    <location>
        <position position="584"/>
    </location>
</feature>
<feature type="lipid moiety-binding region" description="S-palmitoyl cysteine" evidence="13">
    <location>
        <position position="503"/>
    </location>
</feature>
<feature type="lipid moiety-binding region" description="S-palmitoyl cysteine" evidence="13">
    <location>
        <position position="504"/>
    </location>
</feature>
<feature type="disulfide bond" evidence="8">
    <location>
        <begin position="161"/>
        <end position="195"/>
    </location>
</feature>
<feature type="disulfide bond" evidence="8">
    <location>
        <begin position="361"/>
        <end position="367"/>
    </location>
</feature>
<feature type="mutagenesis site" description="Abolishes interaction with PPIB." evidence="9">
    <original>D</original>
    <variation>K</variation>
    <location>
        <position position="348"/>
    </location>
</feature>
<feature type="mutagenesis site" description="Abolished palmitoylation, leading to decreased localization to mitochondria-associated endoplasmic reticulum membrane (MAM)." evidence="10">
    <original>CC</original>
    <variation>AA</variation>
    <location>
        <begin position="503"/>
        <end position="504"/>
    </location>
</feature>
<feature type="strand" evidence="14">
    <location>
        <begin position="71"/>
        <end position="74"/>
    </location>
</feature>
<feature type="strand" evidence="14">
    <location>
        <begin position="78"/>
        <end position="80"/>
    </location>
</feature>
<feature type="strand" evidence="14">
    <location>
        <begin position="104"/>
        <end position="106"/>
    </location>
</feature>
<feature type="strand" evidence="14">
    <location>
        <begin position="122"/>
        <end position="124"/>
    </location>
</feature>
<feature type="strand" evidence="14">
    <location>
        <begin position="131"/>
        <end position="140"/>
    </location>
</feature>
<feature type="strand" evidence="14">
    <location>
        <begin position="142"/>
        <end position="145"/>
    </location>
</feature>
<feature type="strand" evidence="14">
    <location>
        <begin position="147"/>
        <end position="153"/>
    </location>
</feature>
<feature type="strand" evidence="14">
    <location>
        <begin position="160"/>
        <end position="163"/>
    </location>
</feature>
<feature type="strand" evidence="14">
    <location>
        <begin position="166"/>
        <end position="170"/>
    </location>
</feature>
<feature type="helix" evidence="14">
    <location>
        <begin position="177"/>
        <end position="179"/>
    </location>
</feature>
<feature type="strand" evidence="14">
    <location>
        <begin position="186"/>
        <end position="197"/>
    </location>
</feature>
<feature type="strand" evidence="14">
    <location>
        <begin position="200"/>
        <end position="208"/>
    </location>
</feature>
<feature type="turn" evidence="14">
    <location>
        <begin position="210"/>
        <end position="212"/>
    </location>
</feature>
<feature type="strand" evidence="14">
    <location>
        <begin position="215"/>
        <end position="218"/>
    </location>
</feature>
<feature type="helix" evidence="14">
    <location>
        <begin position="229"/>
        <end position="232"/>
    </location>
</feature>
<feature type="strand" evidence="14">
    <location>
        <begin position="237"/>
        <end position="244"/>
    </location>
</feature>
<feature type="turn" evidence="14">
    <location>
        <begin position="245"/>
        <end position="247"/>
    </location>
</feature>
<feature type="strand" evidence="14">
    <location>
        <begin position="248"/>
        <end position="253"/>
    </location>
</feature>
<feature type="strand" evidence="14">
    <location>
        <begin position="256"/>
        <end position="261"/>
    </location>
</feature>
<feature type="strand" evidence="14">
    <location>
        <begin position="292"/>
        <end position="295"/>
    </location>
</feature>
<feature type="strand" evidence="14">
    <location>
        <begin position="311"/>
        <end position="314"/>
    </location>
</feature>
<feature type="strand" evidence="14">
    <location>
        <begin position="325"/>
        <end position="328"/>
    </location>
</feature>
<feature type="turn" evidence="14">
    <location>
        <begin position="345"/>
        <end position="347"/>
    </location>
</feature>
<feature type="helix" evidence="14">
    <location>
        <begin position="359"/>
        <end position="361"/>
    </location>
</feature>
<feature type="strand" evidence="14">
    <location>
        <begin position="367"/>
        <end position="369"/>
    </location>
</feature>
<feature type="strand" evidence="14">
    <location>
        <begin position="374"/>
        <end position="376"/>
    </location>
</feature>
<feature type="strand" evidence="14">
    <location>
        <begin position="388"/>
        <end position="390"/>
    </location>
</feature>
<feature type="strand" evidence="14">
    <location>
        <begin position="420"/>
        <end position="425"/>
    </location>
</feature>
<feature type="strand" evidence="14">
    <location>
        <begin position="430"/>
        <end position="432"/>
    </location>
</feature>
<feature type="strand" evidence="14">
    <location>
        <begin position="437"/>
        <end position="445"/>
    </location>
</feature>
<feature type="helix" evidence="14">
    <location>
        <begin position="446"/>
        <end position="454"/>
    </location>
</feature>
<feature type="turn" evidence="14">
    <location>
        <begin position="455"/>
        <end position="457"/>
    </location>
</feature>
<protein>
    <recommendedName>
        <fullName>Calnexin</fullName>
    </recommendedName>
    <alternativeName>
        <fullName>pp90</fullName>
    </alternativeName>
</protein>
<accession>P24643</accession>
<accession>P79140</accession>
<name>CALX_CANLF</name>
<proteinExistence type="evidence at protein level"/>
<sequence length="593" mass="67603">MEGKWLLCMLLVLGTTIVQAHEGHDDDMIDIEDDLDDVIEEVEDSKSKPDTSAPTSPKVTYKAPVPTGEVYFADSFDRGTLSGWILSKAKKDDTDDEIAKYDGKWEVDEMKETKLPGDKGLVLMSRAKHHAISAKLNKPFLFDTKPLIVQYEVNFQNGIECGGAYVKLLSKTPELNLDQFHDKTPYTIMFGPDKCGEDYKLHFIFRHKNPKTGVYEEKHAKRPDADLKTYFTDKKTHLYTLILNPDNSFEILVDQSIVNSGNLLNDMTPPVNPSREIEDPEDQKPEDWDERPKIPDPDAVKPDDWNEDAPAKIPDEEATKPDGWLDDEPEYVPDPDAEKPEDWDEDMDGEWEAPQIANPKCESAPGCGVWQRPMIDNPNYKGKWKPPMIDNPNYQGIWKPRKIPNPDFFEDLEPFKMTPFSAIGLELWSMTSDIFFDNFIVCGDRRVVDDWANDGWGLKKAADGAAEPGVVGQMIEAAEERPWLWVVYVLTVALPVFLVILFCCSGKKQSSPVEYKKTDAPQPDVKEEEEEKEEEKDKGDEEEEGEEKLEEKQKSDAEEDGGTASQEEDDRKPKAEEDEILNRSPRNRKPRRE</sequence>